<gene>
    <name type="primary">lmpB</name>
    <name type="ORF">DDB_G0287035</name>
</gene>
<organism>
    <name type="scientific">Dictyostelium discoideum</name>
    <name type="common">Social amoeba</name>
    <dbReference type="NCBI Taxonomy" id="44689"/>
    <lineage>
        <taxon>Eukaryota</taxon>
        <taxon>Amoebozoa</taxon>
        <taxon>Evosea</taxon>
        <taxon>Eumycetozoa</taxon>
        <taxon>Dictyostelia</taxon>
        <taxon>Dictyosteliales</taxon>
        <taxon>Dictyosteliaceae</taxon>
        <taxon>Dictyostelium</taxon>
    </lineage>
</organism>
<feature type="chain" id="PRO_0000327758" description="Lysosome membrane protein 2-B">
    <location>
        <begin position="1"/>
        <end position="755"/>
    </location>
</feature>
<feature type="topological domain" description="Cytoplasmic" evidence="2">
    <location>
        <begin position="1"/>
        <end position="6"/>
    </location>
</feature>
<feature type="transmembrane region" description="Helical" evidence="2">
    <location>
        <begin position="7"/>
        <end position="27"/>
    </location>
</feature>
<feature type="topological domain" description="Lumenal" evidence="2">
    <location>
        <begin position="28"/>
        <end position="727"/>
    </location>
</feature>
<feature type="transmembrane region" description="Helical" evidence="2">
    <location>
        <begin position="728"/>
        <end position="748"/>
    </location>
</feature>
<feature type="topological domain" description="Cytoplasmic" evidence="2">
    <location>
        <begin position="749"/>
        <end position="755"/>
    </location>
</feature>
<feature type="short sequence motif" description="Di-leucine motif" evidence="2">
    <location>
        <begin position="752"/>
        <end position="753"/>
    </location>
</feature>
<feature type="glycosylation site" description="N-linked (GlcNAc...) asparagine" evidence="2">
    <location>
        <position position="28"/>
    </location>
</feature>
<feature type="glycosylation site" description="N-linked (GlcNAc...) asparagine" evidence="2">
    <location>
        <position position="76"/>
    </location>
</feature>
<feature type="glycosylation site" description="N-linked (GlcNAc...) asparagine" evidence="2">
    <location>
        <position position="379"/>
    </location>
</feature>
<feature type="glycosylation site" description="N-linked (GlcNAc...) asparagine" evidence="2">
    <location>
        <position position="465"/>
    </location>
</feature>
<feature type="glycosylation site" description="N-linked (GlcNAc...) asparagine" evidence="2">
    <location>
        <position position="497"/>
    </location>
</feature>
<feature type="glycosylation site" description="N-linked (GlcNAc...) asparagine" evidence="2">
    <location>
        <position position="588"/>
    </location>
</feature>
<feature type="glycosylation site" description="N-linked (GlcNAc...) asparagine" evidence="2">
    <location>
        <position position="607"/>
    </location>
</feature>
<feature type="glycosylation site" description="N-linked (GlcNAc...) asparagine" evidence="2">
    <location>
        <position position="680"/>
    </location>
</feature>
<keyword id="KW-0325">Glycoprotein</keyword>
<keyword id="KW-0458">Lysosome</keyword>
<keyword id="KW-0472">Membrane</keyword>
<keyword id="KW-1185">Reference proteome</keyword>
<keyword id="KW-0812">Transmembrane</keyword>
<keyword id="KW-1133">Transmembrane helix</keyword>
<accession>Q9BKJ9</accession>
<accession>Q54KX1</accession>
<sequence>MKHIGRIVSFPIGLVLIAVGIIIFVVVNRTIKDEFKKAAVVIPDNGAEEIVDPWVRFIGNEGDPNNVRTYTFMAYNLTNPIETMQGHLPKYQEVGPYSYNYIYERINANLYEDDEKLSFKLWKRYFPIVADGYRDPTKDTIYHFNLVYGAAVKQAGSEVALSVALTAAAMGKIITGLTDPSFKVKAGFAAAPTVTAGAFSNLLTAAGNDPATACGLWQTSTSSSTPLVPFSVPIIAGSPSDISQAQCQALFDPSNKFSLTDPTNVGVYLLNPAGSKAALLASPFGLTSVQADLIMKYQLALTSTFVPTTLVSRFAECSDPKTCTNNPLYFGLLQWAKNPSLLGQSVFAIPNSGVPAAPEFGIYTSSELSLTKAGSLFLNTSTINLITPTSIGTILVYGQKLKADPTSIPPALYAPFSSGEFDAIVKYTGYIMAAFVDGDIIKNQIFKDYQGGPIVKHTVHDFLFNSTDPLLKLMYPDTPSAWVSSPLDNIQDVKVANATLHTDEIYTGVGDIDLVSSPITFEGEEELNYNKKIKVSGSFAEQLPPSYLSKDPEAPVNVFTDEFARSLSFRKEVGGNFGGIPYYRYRINESNWEINPDYFQTIPYLLNLTSIKSGAPAYLSRPRLKGIDVGYYYKAGITDLINDDEDLDVFADYEPRSGKAIHGRYSLQVNTYIQGSDGTNSTLYNKYSAFRSDVVHPMFWGVNIIAATQEQIDILTKAYKVDSFRYAITVILIVVGGFLSLISGGLFVLDKIIDL</sequence>
<proteinExistence type="evidence at protein level"/>
<reference key="1">
    <citation type="journal article" date="2001" name="J. Biol. Chem.">
        <title>Characterization of CD36/LIMPII homologues in Dictyostelium discoideum.</title>
        <authorList>
            <person name="Janssen K.-P."/>
            <person name="Rost R."/>
            <person name="Eichinger L."/>
            <person name="Schleicher M."/>
        </authorList>
    </citation>
    <scope>NUCLEOTIDE SEQUENCE [MRNA]</scope>
    <scope>DEVELOPMENTAL STAGE</scope>
    <scope>SUBCELLULAR LOCATION</scope>
    <scope>GLYCOSYLATION</scope>
    <scope>TOPOLOGY</scope>
    <source>
        <strain>AX4</strain>
    </source>
</reference>
<reference key="2">
    <citation type="journal article" date="2005" name="Nature">
        <title>The genome of the social amoeba Dictyostelium discoideum.</title>
        <authorList>
            <person name="Eichinger L."/>
            <person name="Pachebat J.A."/>
            <person name="Gloeckner G."/>
            <person name="Rajandream M.A."/>
            <person name="Sucgang R."/>
            <person name="Berriman M."/>
            <person name="Song J."/>
            <person name="Olsen R."/>
            <person name="Szafranski K."/>
            <person name="Xu Q."/>
            <person name="Tunggal B."/>
            <person name="Kummerfeld S."/>
            <person name="Madera M."/>
            <person name="Konfortov B.A."/>
            <person name="Rivero F."/>
            <person name="Bankier A.T."/>
            <person name="Lehmann R."/>
            <person name="Hamlin N."/>
            <person name="Davies R."/>
            <person name="Gaudet P."/>
            <person name="Fey P."/>
            <person name="Pilcher K."/>
            <person name="Chen G."/>
            <person name="Saunders D."/>
            <person name="Sodergren E.J."/>
            <person name="Davis P."/>
            <person name="Kerhornou A."/>
            <person name="Nie X."/>
            <person name="Hall N."/>
            <person name="Anjard C."/>
            <person name="Hemphill L."/>
            <person name="Bason N."/>
            <person name="Farbrother P."/>
            <person name="Desany B."/>
            <person name="Just E."/>
            <person name="Morio T."/>
            <person name="Rost R."/>
            <person name="Churcher C.M."/>
            <person name="Cooper J."/>
            <person name="Haydock S."/>
            <person name="van Driessche N."/>
            <person name="Cronin A."/>
            <person name="Goodhead I."/>
            <person name="Muzny D.M."/>
            <person name="Mourier T."/>
            <person name="Pain A."/>
            <person name="Lu M."/>
            <person name="Harper D."/>
            <person name="Lindsay R."/>
            <person name="Hauser H."/>
            <person name="James K.D."/>
            <person name="Quiles M."/>
            <person name="Madan Babu M."/>
            <person name="Saito T."/>
            <person name="Buchrieser C."/>
            <person name="Wardroper A."/>
            <person name="Felder M."/>
            <person name="Thangavelu M."/>
            <person name="Johnson D."/>
            <person name="Knights A."/>
            <person name="Loulseged H."/>
            <person name="Mungall K.L."/>
            <person name="Oliver K."/>
            <person name="Price C."/>
            <person name="Quail M.A."/>
            <person name="Urushihara H."/>
            <person name="Hernandez J."/>
            <person name="Rabbinowitsch E."/>
            <person name="Steffen D."/>
            <person name="Sanders M."/>
            <person name="Ma J."/>
            <person name="Kohara Y."/>
            <person name="Sharp S."/>
            <person name="Simmonds M.N."/>
            <person name="Spiegler S."/>
            <person name="Tivey A."/>
            <person name="Sugano S."/>
            <person name="White B."/>
            <person name="Walker D."/>
            <person name="Woodward J.R."/>
            <person name="Winckler T."/>
            <person name="Tanaka Y."/>
            <person name="Shaulsky G."/>
            <person name="Schleicher M."/>
            <person name="Weinstock G.M."/>
            <person name="Rosenthal A."/>
            <person name="Cox E.C."/>
            <person name="Chisholm R.L."/>
            <person name="Gibbs R.A."/>
            <person name="Loomis W.F."/>
            <person name="Platzer M."/>
            <person name="Kay R.R."/>
            <person name="Williams J.G."/>
            <person name="Dear P.H."/>
            <person name="Noegel A.A."/>
            <person name="Barrell B.G."/>
            <person name="Kuspa A."/>
        </authorList>
    </citation>
    <scope>NUCLEOTIDE SEQUENCE [LARGE SCALE GENOMIC DNA]</scope>
    <source>
        <strain>AX4</strain>
    </source>
</reference>
<dbReference type="EMBL" id="AF238324">
    <property type="protein sequence ID" value="AAK30040.1"/>
    <property type="molecule type" value="mRNA"/>
</dbReference>
<dbReference type="EMBL" id="AAFI02000096">
    <property type="protein sequence ID" value="EAL63882.1"/>
    <property type="molecule type" value="Genomic_DNA"/>
</dbReference>
<dbReference type="RefSeq" id="XP_637399.1">
    <property type="nucleotide sequence ID" value="XM_632307.1"/>
</dbReference>
<dbReference type="STRING" id="44689.Q9BKJ9"/>
<dbReference type="GlyCosmos" id="Q9BKJ9">
    <property type="glycosylation" value="8 sites, No reported glycans"/>
</dbReference>
<dbReference type="GlyGen" id="Q9BKJ9">
    <property type="glycosylation" value="8 sites"/>
</dbReference>
<dbReference type="PaxDb" id="44689-DDB0191189"/>
<dbReference type="ABCD" id="Q9BKJ9">
    <property type="antibodies" value="6 sequenced antibodies"/>
</dbReference>
<dbReference type="EnsemblProtists" id="EAL63882">
    <property type="protein sequence ID" value="EAL63882"/>
    <property type="gene ID" value="DDB_G0287035"/>
</dbReference>
<dbReference type="GeneID" id="8625930"/>
<dbReference type="KEGG" id="ddi:DDB_G0287035"/>
<dbReference type="dictyBase" id="DDB_G0287035">
    <property type="gene designation" value="lmpB"/>
</dbReference>
<dbReference type="VEuPathDB" id="AmoebaDB:DDB_G0287035"/>
<dbReference type="eggNOG" id="ENOG502RBM0">
    <property type="taxonomic scope" value="Eukaryota"/>
</dbReference>
<dbReference type="HOGENOM" id="CLU_368981_0_0_1"/>
<dbReference type="InParanoid" id="Q9BKJ9"/>
<dbReference type="OMA" id="KAIHGRY"/>
<dbReference type="PhylomeDB" id="Q9BKJ9"/>
<dbReference type="Reactome" id="R-DDI-114608">
    <property type="pathway name" value="Platelet degranulation"/>
</dbReference>
<dbReference type="Reactome" id="R-DDI-434313">
    <property type="pathway name" value="Intracellular metabolism of fatty acids regulates insulin secretion"/>
</dbReference>
<dbReference type="Reactome" id="R-DDI-6798695">
    <property type="pathway name" value="Neutrophil degranulation"/>
</dbReference>
<dbReference type="PRO" id="PR:Q9BKJ9"/>
<dbReference type="Proteomes" id="UP000002195">
    <property type="component" value="Chromosome 4"/>
</dbReference>
<dbReference type="GO" id="GO:0030659">
    <property type="term" value="C:cytoplasmic vesicle membrane"/>
    <property type="evidence" value="ECO:0000314"/>
    <property type="project" value="dictyBase"/>
</dbReference>
<dbReference type="GO" id="GO:0032009">
    <property type="term" value="C:early phagosome"/>
    <property type="evidence" value="ECO:0000314"/>
    <property type="project" value="dictyBase"/>
</dbReference>
<dbReference type="GO" id="GO:0005765">
    <property type="term" value="C:lysosomal membrane"/>
    <property type="evidence" value="ECO:0007669"/>
    <property type="project" value="UniProtKB-SubCell"/>
</dbReference>
<dbReference type="GO" id="GO:0045335">
    <property type="term" value="C:phagocytic vesicle"/>
    <property type="evidence" value="ECO:0000314"/>
    <property type="project" value="dictyBase"/>
</dbReference>
<dbReference type="GO" id="GO:0005886">
    <property type="term" value="C:plasma membrane"/>
    <property type="evidence" value="ECO:0000314"/>
    <property type="project" value="dictyBase"/>
</dbReference>
<dbReference type="GO" id="GO:0031982">
    <property type="term" value="C:vesicle"/>
    <property type="evidence" value="ECO:0000314"/>
    <property type="project" value="dictyBase"/>
</dbReference>
<dbReference type="GO" id="GO:0012506">
    <property type="term" value="C:vesicle membrane"/>
    <property type="evidence" value="ECO:0000318"/>
    <property type="project" value="GO_Central"/>
</dbReference>
<dbReference type="GO" id="GO:0005044">
    <property type="term" value="F:scavenger receptor activity"/>
    <property type="evidence" value="ECO:0000318"/>
    <property type="project" value="GO_Central"/>
</dbReference>
<dbReference type="GO" id="GO:0006911">
    <property type="term" value="P:phagocytosis, engulfment"/>
    <property type="evidence" value="ECO:0000315"/>
    <property type="project" value="dictyBase"/>
</dbReference>
<dbReference type="InterPro" id="IPR002159">
    <property type="entry name" value="CD36_fam"/>
</dbReference>
<dbReference type="PANTHER" id="PTHR11923:SF102">
    <property type="entry name" value="LYSOSOME MEMBRANE PROTEIN 2-B"/>
    <property type="match status" value="1"/>
</dbReference>
<dbReference type="PANTHER" id="PTHR11923">
    <property type="entry name" value="SCAVENGER RECEPTOR CLASS B TYPE-1 SR-B1"/>
    <property type="match status" value="1"/>
</dbReference>
<dbReference type="Pfam" id="PF01130">
    <property type="entry name" value="CD36"/>
    <property type="match status" value="2"/>
</dbReference>
<dbReference type="PRINTS" id="PR01609">
    <property type="entry name" value="CD36FAMILY"/>
</dbReference>
<comment type="function">
    <text evidence="1">May act as a lysosomal receptor (By similarity). May be involved in macropinocytosis and fluid phase exocytosis.</text>
</comment>
<comment type="subcellular location">
    <subcellularLocation>
        <location evidence="4">Lysosome membrane</location>
        <topology evidence="4">Multi-pass membrane protein</topology>
    </subcellularLocation>
    <text evidence="3">Localizes to membranes of endolysosomal vesicles and macropinosomes.</text>
</comment>
<comment type="developmental stage">
    <text evidence="3">Shows a bi-phasic developmental regulation. Present in growth phase cells as well as in early aggregating cells, but the levels drop significantly during the slug stage. Protein levels rise again at later multicellular stages of the development to higher amounts than in growth phase cells, and the protein is still detectable in significant amounts in fully developed fruiting bodies (at protein level).</text>
</comment>
<comment type="PTM">
    <text evidence="3">Heavily glycosylated.</text>
</comment>
<comment type="similarity">
    <text evidence="4">Belongs to the CD36 family.</text>
</comment>
<name>LMPB_DICDI</name>
<protein>
    <recommendedName>
        <fullName>Lysosome membrane protein 2-B</fullName>
    </recommendedName>
    <alternativeName>
        <fullName>Lysosome membrane protein II-2</fullName>
        <shortName>LIMP II-2</shortName>
    </alternativeName>
</protein>
<evidence type="ECO:0000250" key="1"/>
<evidence type="ECO:0000255" key="2"/>
<evidence type="ECO:0000269" key="3">
    <source>
    </source>
</evidence>
<evidence type="ECO:0000305" key="4"/>